<proteinExistence type="inferred from homology"/>
<accession>B2FMF6</accession>
<organism>
    <name type="scientific">Stenotrophomonas maltophilia (strain K279a)</name>
    <dbReference type="NCBI Taxonomy" id="522373"/>
    <lineage>
        <taxon>Bacteria</taxon>
        <taxon>Pseudomonadati</taxon>
        <taxon>Pseudomonadota</taxon>
        <taxon>Gammaproteobacteria</taxon>
        <taxon>Lysobacterales</taxon>
        <taxon>Lysobacteraceae</taxon>
        <taxon>Stenotrophomonas</taxon>
        <taxon>Stenotrophomonas maltophilia group</taxon>
    </lineage>
</organism>
<name>EFP_STRMK</name>
<reference key="1">
    <citation type="journal article" date="2008" name="Genome Biol.">
        <title>The complete genome, comparative and functional analysis of Stenotrophomonas maltophilia reveals an organism heavily shielded by drug resistance determinants.</title>
        <authorList>
            <person name="Crossman L.C."/>
            <person name="Gould V.C."/>
            <person name="Dow J.M."/>
            <person name="Vernikos G.S."/>
            <person name="Okazaki A."/>
            <person name="Sebaihia M."/>
            <person name="Saunders D."/>
            <person name="Arrowsmith C."/>
            <person name="Carver T."/>
            <person name="Peters N."/>
            <person name="Adlem E."/>
            <person name="Kerhornou A."/>
            <person name="Lord A."/>
            <person name="Murphy L."/>
            <person name="Seeger K."/>
            <person name="Squares R."/>
            <person name="Rutter S."/>
            <person name="Quail M.A."/>
            <person name="Rajandream M.A."/>
            <person name="Harris D."/>
            <person name="Churcher C."/>
            <person name="Bentley S.D."/>
            <person name="Parkhill J."/>
            <person name="Thomson N.R."/>
            <person name="Avison M.B."/>
        </authorList>
    </citation>
    <scope>NUCLEOTIDE SEQUENCE [LARGE SCALE GENOMIC DNA]</scope>
    <source>
        <strain>K279a</strain>
    </source>
</reference>
<dbReference type="EMBL" id="AM743169">
    <property type="protein sequence ID" value="CAQ46751.1"/>
    <property type="molecule type" value="Genomic_DNA"/>
</dbReference>
<dbReference type="RefSeq" id="WP_005410381.1">
    <property type="nucleotide sequence ID" value="NC_010943.1"/>
</dbReference>
<dbReference type="SMR" id="B2FMF6"/>
<dbReference type="EnsemblBacteria" id="CAQ46751">
    <property type="protein sequence ID" value="CAQ46751"/>
    <property type="gene ID" value="Smlt3316"/>
</dbReference>
<dbReference type="GeneID" id="97261912"/>
<dbReference type="KEGG" id="sml:Smlt3316"/>
<dbReference type="eggNOG" id="COG0231">
    <property type="taxonomic scope" value="Bacteria"/>
</dbReference>
<dbReference type="HOGENOM" id="CLU_074944_0_0_6"/>
<dbReference type="UniPathway" id="UPA00345"/>
<dbReference type="Proteomes" id="UP000008840">
    <property type="component" value="Chromosome"/>
</dbReference>
<dbReference type="GO" id="GO:0005737">
    <property type="term" value="C:cytoplasm"/>
    <property type="evidence" value="ECO:0007669"/>
    <property type="project" value="UniProtKB-SubCell"/>
</dbReference>
<dbReference type="GO" id="GO:0003746">
    <property type="term" value="F:translation elongation factor activity"/>
    <property type="evidence" value="ECO:0007669"/>
    <property type="project" value="UniProtKB-UniRule"/>
</dbReference>
<dbReference type="GO" id="GO:0043043">
    <property type="term" value="P:peptide biosynthetic process"/>
    <property type="evidence" value="ECO:0007669"/>
    <property type="project" value="InterPro"/>
</dbReference>
<dbReference type="CDD" id="cd04470">
    <property type="entry name" value="S1_EF-P_repeat_1"/>
    <property type="match status" value="1"/>
</dbReference>
<dbReference type="CDD" id="cd05794">
    <property type="entry name" value="S1_EF-P_repeat_2"/>
    <property type="match status" value="1"/>
</dbReference>
<dbReference type="FunFam" id="2.30.30.30:FF:000003">
    <property type="entry name" value="Elongation factor P"/>
    <property type="match status" value="1"/>
</dbReference>
<dbReference type="FunFam" id="2.40.50.140:FF:000004">
    <property type="entry name" value="Elongation factor P"/>
    <property type="match status" value="1"/>
</dbReference>
<dbReference type="FunFam" id="2.40.50.140:FF:000009">
    <property type="entry name" value="Elongation factor P"/>
    <property type="match status" value="1"/>
</dbReference>
<dbReference type="Gene3D" id="2.30.30.30">
    <property type="match status" value="1"/>
</dbReference>
<dbReference type="Gene3D" id="2.40.50.140">
    <property type="entry name" value="Nucleic acid-binding proteins"/>
    <property type="match status" value="2"/>
</dbReference>
<dbReference type="HAMAP" id="MF_00141">
    <property type="entry name" value="EF_P"/>
    <property type="match status" value="1"/>
</dbReference>
<dbReference type="InterPro" id="IPR015365">
    <property type="entry name" value="Elong-fact-P_C"/>
</dbReference>
<dbReference type="InterPro" id="IPR012340">
    <property type="entry name" value="NA-bd_OB-fold"/>
</dbReference>
<dbReference type="InterPro" id="IPR014722">
    <property type="entry name" value="Rib_uL2_dom2"/>
</dbReference>
<dbReference type="InterPro" id="IPR020599">
    <property type="entry name" value="Transl_elong_fac_P/YeiP"/>
</dbReference>
<dbReference type="InterPro" id="IPR013185">
    <property type="entry name" value="Transl_elong_KOW-like"/>
</dbReference>
<dbReference type="InterPro" id="IPR001059">
    <property type="entry name" value="Transl_elong_P/YeiP_cen"/>
</dbReference>
<dbReference type="InterPro" id="IPR013852">
    <property type="entry name" value="Transl_elong_P/YeiP_CS"/>
</dbReference>
<dbReference type="InterPro" id="IPR011768">
    <property type="entry name" value="Transl_elongation_fac_P"/>
</dbReference>
<dbReference type="InterPro" id="IPR008991">
    <property type="entry name" value="Translation_prot_SH3-like_sf"/>
</dbReference>
<dbReference type="NCBIfam" id="TIGR00038">
    <property type="entry name" value="efp"/>
    <property type="match status" value="1"/>
</dbReference>
<dbReference type="NCBIfam" id="NF001810">
    <property type="entry name" value="PRK00529.1"/>
    <property type="match status" value="1"/>
</dbReference>
<dbReference type="PANTHER" id="PTHR30053">
    <property type="entry name" value="ELONGATION FACTOR P"/>
    <property type="match status" value="1"/>
</dbReference>
<dbReference type="PANTHER" id="PTHR30053:SF12">
    <property type="entry name" value="ELONGATION FACTOR P (EF-P) FAMILY PROTEIN"/>
    <property type="match status" value="1"/>
</dbReference>
<dbReference type="Pfam" id="PF01132">
    <property type="entry name" value="EFP"/>
    <property type="match status" value="1"/>
</dbReference>
<dbReference type="Pfam" id="PF08207">
    <property type="entry name" value="EFP_N"/>
    <property type="match status" value="1"/>
</dbReference>
<dbReference type="Pfam" id="PF09285">
    <property type="entry name" value="Elong-fact-P_C"/>
    <property type="match status" value="1"/>
</dbReference>
<dbReference type="PIRSF" id="PIRSF005901">
    <property type="entry name" value="EF-P"/>
    <property type="match status" value="1"/>
</dbReference>
<dbReference type="SMART" id="SM01185">
    <property type="entry name" value="EFP"/>
    <property type="match status" value="1"/>
</dbReference>
<dbReference type="SMART" id="SM00841">
    <property type="entry name" value="Elong-fact-P_C"/>
    <property type="match status" value="1"/>
</dbReference>
<dbReference type="SUPFAM" id="SSF50249">
    <property type="entry name" value="Nucleic acid-binding proteins"/>
    <property type="match status" value="2"/>
</dbReference>
<dbReference type="SUPFAM" id="SSF50104">
    <property type="entry name" value="Translation proteins SH3-like domain"/>
    <property type="match status" value="1"/>
</dbReference>
<dbReference type="PROSITE" id="PS01275">
    <property type="entry name" value="EFP"/>
    <property type="match status" value="1"/>
</dbReference>
<protein>
    <recommendedName>
        <fullName evidence="1">Elongation factor P</fullName>
        <shortName evidence="1">EF-P</shortName>
    </recommendedName>
</protein>
<evidence type="ECO:0000255" key="1">
    <source>
        <dbReference type="HAMAP-Rule" id="MF_00141"/>
    </source>
</evidence>
<sequence>MASYGMNDVKNGMKILVNNQPAVIIDTEYVKPGKGQAFTRVKYRLIKDGRTQEVTMKSTDSLDAADVVDTDMNFMYSDGEYWHFMDPESFEQVQATKAGMGGAEKWLKGEESCVVTLWNGEPIFVQPPNFVELKITETDPGVRGDTSGGGGKPATLETGAVVRVPLFVNQDEVIRVDTRSGEYSARVK</sequence>
<gene>
    <name evidence="1" type="primary">efp</name>
    <name type="ordered locus">Smlt3316</name>
</gene>
<comment type="function">
    <text evidence="1">Involved in peptide bond synthesis. Alleviates ribosome stalling that occurs when 3 or more consecutive Pro residues or the sequence PPG is present in a protein, possibly by augmenting the peptidyl transferase activity of the ribosome. Modification of Lys-34 is required for alleviation.</text>
</comment>
<comment type="pathway">
    <text evidence="1">Protein biosynthesis; polypeptide chain elongation.</text>
</comment>
<comment type="subcellular location">
    <subcellularLocation>
        <location evidence="1">Cytoplasm</location>
    </subcellularLocation>
</comment>
<comment type="PTM">
    <text evidence="1">May be beta-lysylated on the epsilon-amino group of Lys-34 by the combined action of EpmA and EpmB, and then hydroxylated on the C5 position of the same residue by EpmC (if this protein is present). Lysylation is critical for the stimulatory effect of EF-P on peptide-bond formation. The lysylation moiety may extend toward the peptidyltransferase center and stabilize the terminal 3-CCA end of the tRNA. Hydroxylation of the C5 position on Lys-34 may allow additional potential stabilizing hydrogen-bond interactions with the P-tRNA.</text>
</comment>
<comment type="similarity">
    <text evidence="1">Belongs to the elongation factor P family.</text>
</comment>
<feature type="chain" id="PRO_1000096210" description="Elongation factor P">
    <location>
        <begin position="1"/>
        <end position="188"/>
    </location>
</feature>
<feature type="modified residue" description="N6-(3,6-diaminohexanoyl)-5-hydroxylysine" evidence="1">
    <location>
        <position position="34"/>
    </location>
</feature>
<keyword id="KW-0963">Cytoplasm</keyword>
<keyword id="KW-0251">Elongation factor</keyword>
<keyword id="KW-0379">Hydroxylation</keyword>
<keyword id="KW-0648">Protein biosynthesis</keyword>
<keyword id="KW-1185">Reference proteome</keyword>